<proteinExistence type="inferred from homology"/>
<dbReference type="EC" id="2.6.1.11" evidence="1"/>
<dbReference type="EMBL" id="AE005176">
    <property type="protein sequence ID" value="AAK04897.1"/>
    <property type="molecule type" value="Genomic_DNA"/>
</dbReference>
<dbReference type="PIR" id="G86724">
    <property type="entry name" value="G86724"/>
</dbReference>
<dbReference type="RefSeq" id="NP_266955.1">
    <property type="nucleotide sequence ID" value="NC_002662.1"/>
</dbReference>
<dbReference type="RefSeq" id="WP_010905566.1">
    <property type="nucleotide sequence ID" value="NC_002662.1"/>
</dbReference>
<dbReference type="SMR" id="Q9CHD3"/>
<dbReference type="PaxDb" id="272623-L0106"/>
<dbReference type="EnsemblBacteria" id="AAK04897">
    <property type="protein sequence ID" value="AAK04897"/>
    <property type="gene ID" value="L0106"/>
</dbReference>
<dbReference type="KEGG" id="lla:L0106"/>
<dbReference type="PATRIC" id="fig|272623.7.peg.855"/>
<dbReference type="eggNOG" id="COG4992">
    <property type="taxonomic scope" value="Bacteria"/>
</dbReference>
<dbReference type="HOGENOM" id="CLU_016922_10_1_9"/>
<dbReference type="OrthoDB" id="9807885at2"/>
<dbReference type="UniPathway" id="UPA00068">
    <property type="reaction ID" value="UER00109"/>
</dbReference>
<dbReference type="Proteomes" id="UP000002196">
    <property type="component" value="Chromosome"/>
</dbReference>
<dbReference type="GO" id="GO:0005737">
    <property type="term" value="C:cytoplasm"/>
    <property type="evidence" value="ECO:0007669"/>
    <property type="project" value="UniProtKB-SubCell"/>
</dbReference>
<dbReference type="GO" id="GO:0042802">
    <property type="term" value="F:identical protein binding"/>
    <property type="evidence" value="ECO:0007669"/>
    <property type="project" value="TreeGrafter"/>
</dbReference>
<dbReference type="GO" id="GO:0003992">
    <property type="term" value="F:N2-acetyl-L-ornithine:2-oxoglutarate 5-aminotransferase activity"/>
    <property type="evidence" value="ECO:0007669"/>
    <property type="project" value="UniProtKB-UniRule"/>
</dbReference>
<dbReference type="GO" id="GO:0030170">
    <property type="term" value="F:pyridoxal phosphate binding"/>
    <property type="evidence" value="ECO:0007669"/>
    <property type="project" value="InterPro"/>
</dbReference>
<dbReference type="GO" id="GO:0006526">
    <property type="term" value="P:L-arginine biosynthetic process"/>
    <property type="evidence" value="ECO:0007669"/>
    <property type="project" value="UniProtKB-UniRule"/>
</dbReference>
<dbReference type="CDD" id="cd00610">
    <property type="entry name" value="OAT_like"/>
    <property type="match status" value="1"/>
</dbReference>
<dbReference type="FunFam" id="3.40.640.10:FF:000004">
    <property type="entry name" value="Acetylornithine aminotransferase"/>
    <property type="match status" value="1"/>
</dbReference>
<dbReference type="Gene3D" id="3.90.1150.10">
    <property type="entry name" value="Aspartate Aminotransferase, domain 1"/>
    <property type="match status" value="1"/>
</dbReference>
<dbReference type="Gene3D" id="3.40.640.10">
    <property type="entry name" value="Type I PLP-dependent aspartate aminotransferase-like (Major domain)"/>
    <property type="match status" value="1"/>
</dbReference>
<dbReference type="HAMAP" id="MF_01107">
    <property type="entry name" value="ArgD_aminotrans_3"/>
    <property type="match status" value="1"/>
</dbReference>
<dbReference type="InterPro" id="IPR004636">
    <property type="entry name" value="AcOrn/SuccOrn_fam"/>
</dbReference>
<dbReference type="InterPro" id="IPR005814">
    <property type="entry name" value="Aminotrans_3"/>
</dbReference>
<dbReference type="InterPro" id="IPR049704">
    <property type="entry name" value="Aminotrans_3_PPA_site"/>
</dbReference>
<dbReference type="InterPro" id="IPR050103">
    <property type="entry name" value="Class-III_PLP-dep_AT"/>
</dbReference>
<dbReference type="InterPro" id="IPR015424">
    <property type="entry name" value="PyrdxlP-dep_Trfase"/>
</dbReference>
<dbReference type="InterPro" id="IPR015421">
    <property type="entry name" value="PyrdxlP-dep_Trfase_major"/>
</dbReference>
<dbReference type="InterPro" id="IPR015422">
    <property type="entry name" value="PyrdxlP-dep_Trfase_small"/>
</dbReference>
<dbReference type="NCBIfam" id="TIGR00707">
    <property type="entry name" value="argD"/>
    <property type="match status" value="1"/>
</dbReference>
<dbReference type="NCBIfam" id="NF002325">
    <property type="entry name" value="PRK01278.1"/>
    <property type="match status" value="1"/>
</dbReference>
<dbReference type="NCBIfam" id="NF002797">
    <property type="entry name" value="PRK02936.1"/>
    <property type="match status" value="1"/>
</dbReference>
<dbReference type="PANTHER" id="PTHR11986:SF79">
    <property type="entry name" value="ACETYLORNITHINE AMINOTRANSFERASE, MITOCHONDRIAL"/>
    <property type="match status" value="1"/>
</dbReference>
<dbReference type="PANTHER" id="PTHR11986">
    <property type="entry name" value="AMINOTRANSFERASE CLASS III"/>
    <property type="match status" value="1"/>
</dbReference>
<dbReference type="Pfam" id="PF00202">
    <property type="entry name" value="Aminotran_3"/>
    <property type="match status" value="1"/>
</dbReference>
<dbReference type="PIRSF" id="PIRSF000521">
    <property type="entry name" value="Transaminase_4ab_Lys_Orn"/>
    <property type="match status" value="1"/>
</dbReference>
<dbReference type="SUPFAM" id="SSF53383">
    <property type="entry name" value="PLP-dependent transferases"/>
    <property type="match status" value="1"/>
</dbReference>
<dbReference type="PROSITE" id="PS00600">
    <property type="entry name" value="AA_TRANSFER_CLASS_3"/>
    <property type="match status" value="1"/>
</dbReference>
<evidence type="ECO:0000255" key="1">
    <source>
        <dbReference type="HAMAP-Rule" id="MF_01107"/>
    </source>
</evidence>
<organism>
    <name type="scientific">Lactococcus lactis subsp. lactis (strain IL1403)</name>
    <name type="common">Streptococcus lactis</name>
    <dbReference type="NCBI Taxonomy" id="272623"/>
    <lineage>
        <taxon>Bacteria</taxon>
        <taxon>Bacillati</taxon>
        <taxon>Bacillota</taxon>
        <taxon>Bacilli</taxon>
        <taxon>Lactobacillales</taxon>
        <taxon>Streptococcaceae</taxon>
        <taxon>Lactococcus</taxon>
    </lineage>
</organism>
<reference key="1">
    <citation type="journal article" date="2001" name="Genome Res.">
        <title>The complete genome sequence of the lactic acid bacterium Lactococcus lactis ssp. lactis IL1403.</title>
        <authorList>
            <person name="Bolotin A."/>
            <person name="Wincker P."/>
            <person name="Mauger S."/>
            <person name="Jaillon O."/>
            <person name="Malarme K."/>
            <person name="Weissenbach J."/>
            <person name="Ehrlich S.D."/>
            <person name="Sorokin A."/>
        </authorList>
    </citation>
    <scope>NUCLEOTIDE SEQUENCE [LARGE SCALE GENOMIC DNA]</scope>
    <source>
        <strain>IL1403</strain>
    </source>
</reference>
<accession>Q9CHD3</accession>
<name>ARGD_LACLA</name>
<sequence>MTNLFENYGRLPFSLIKGEDQYLFDDRGNKYLDFTSGIGVMNLGYSFEKGKVAVKAQLDSLSHLSNLYQNPLQEDVAEKLSQNHSYKAFFCNSGTEANEAALKLTHLIKKDQKILAFTDGFHGRTFGAMSATMQEKIQAGFSPLLPNFVASPFNDVVALEQILEKEKIGAIIFEIIQGEGGVLPISPDFVEALKSCQQKGILLIIDEIQTGIGRTGKLFAFEHFDFEPDIFTLAKALANGIPTGAMLAKNKYASYFSAGKHGSTFGGNPLAMASANEVLKEIDSDFLEKVTDKGIFFLKLLTEKLSVKATVKSIRGLGLMIGIQLTDEKKVPEVLALLRENGLLALSAGHDVIRLLPPLVMTKVELQKGAELLEKIL</sequence>
<keyword id="KW-0028">Amino-acid biosynthesis</keyword>
<keyword id="KW-0032">Aminotransferase</keyword>
<keyword id="KW-0055">Arginine biosynthesis</keyword>
<keyword id="KW-0963">Cytoplasm</keyword>
<keyword id="KW-0663">Pyridoxal phosphate</keyword>
<keyword id="KW-1185">Reference proteome</keyword>
<keyword id="KW-0808">Transferase</keyword>
<comment type="catalytic activity">
    <reaction evidence="1">
        <text>N(2)-acetyl-L-ornithine + 2-oxoglutarate = N-acetyl-L-glutamate 5-semialdehyde + L-glutamate</text>
        <dbReference type="Rhea" id="RHEA:18049"/>
        <dbReference type="ChEBI" id="CHEBI:16810"/>
        <dbReference type="ChEBI" id="CHEBI:29123"/>
        <dbReference type="ChEBI" id="CHEBI:29985"/>
        <dbReference type="ChEBI" id="CHEBI:57805"/>
        <dbReference type="EC" id="2.6.1.11"/>
    </reaction>
</comment>
<comment type="cofactor">
    <cofactor evidence="1">
        <name>pyridoxal 5'-phosphate</name>
        <dbReference type="ChEBI" id="CHEBI:597326"/>
    </cofactor>
    <text evidence="1">Binds 1 pyridoxal phosphate per subunit.</text>
</comment>
<comment type="pathway">
    <text evidence="1">Amino-acid biosynthesis; L-arginine biosynthesis; N(2)-acetyl-L-ornithine from L-glutamate: step 4/4.</text>
</comment>
<comment type="subunit">
    <text evidence="1">Homodimer.</text>
</comment>
<comment type="subcellular location">
    <subcellularLocation>
        <location evidence="1">Cytoplasm</location>
    </subcellularLocation>
</comment>
<comment type="miscellaneous">
    <text evidence="1">May also have succinyldiaminopimelate aminotransferase activity, thus carrying out the corresponding step in lysine biosynthesis.</text>
</comment>
<comment type="similarity">
    <text evidence="1">Belongs to the class-III pyridoxal-phosphate-dependent aminotransferase family. ArgD subfamily.</text>
</comment>
<protein>
    <recommendedName>
        <fullName evidence="1">Acetylornithine aminotransferase</fullName>
        <shortName evidence="1">ACOAT</shortName>
        <ecNumber evidence="1">2.6.1.11</ecNumber>
    </recommendedName>
</protein>
<feature type="chain" id="PRO_0000112748" description="Acetylornithine aminotransferase">
    <location>
        <begin position="1"/>
        <end position="377"/>
    </location>
</feature>
<feature type="binding site" evidence="1">
    <location>
        <begin position="94"/>
        <end position="95"/>
    </location>
    <ligand>
        <name>pyridoxal 5'-phosphate</name>
        <dbReference type="ChEBI" id="CHEBI:597326"/>
    </ligand>
</feature>
<feature type="binding site" evidence="1">
    <location>
        <position position="121"/>
    </location>
    <ligand>
        <name>pyridoxal 5'-phosphate</name>
        <dbReference type="ChEBI" id="CHEBI:597326"/>
    </ligand>
</feature>
<feature type="binding site" evidence="1">
    <location>
        <position position="124"/>
    </location>
    <ligand>
        <name>N(2)-acetyl-L-ornithine</name>
        <dbReference type="ChEBI" id="CHEBI:57805"/>
    </ligand>
</feature>
<feature type="binding site" evidence="1">
    <location>
        <begin position="206"/>
        <end position="209"/>
    </location>
    <ligand>
        <name>pyridoxal 5'-phosphate</name>
        <dbReference type="ChEBI" id="CHEBI:597326"/>
    </ligand>
</feature>
<feature type="binding site" evidence="1">
    <location>
        <position position="263"/>
    </location>
    <ligand>
        <name>N(2)-acetyl-L-ornithine</name>
        <dbReference type="ChEBI" id="CHEBI:57805"/>
    </ligand>
</feature>
<feature type="binding site" evidence="1">
    <location>
        <position position="264"/>
    </location>
    <ligand>
        <name>pyridoxal 5'-phosphate</name>
        <dbReference type="ChEBI" id="CHEBI:597326"/>
    </ligand>
</feature>
<feature type="modified residue" description="N6-(pyridoxal phosphate)lysine" evidence="1">
    <location>
        <position position="235"/>
    </location>
</feature>
<gene>
    <name evidence="1" type="primary">argD</name>
    <name type="ordered locus">LL0799</name>
    <name type="ORF">L0106</name>
</gene>